<proteinExistence type="evidence at protein level"/>
<gene>
    <name evidence="1" type="primary">leuC</name>
    <name type="ordered locus">BQ2027_MB3012C</name>
</gene>
<name>LEUC_MYCBO</name>
<sequence>MALQTGEPRTLAEKIWDDHIVVSGGGCAPDLIYIDLHLVHEVTSPQAFDGLRLAGRRVRRPELTLATEDHNVPTVDIDQPIADPVSRTQVETLRRNCAEFGIRLHSMGDIEQGIVHVVGPQLGLTQPGMTIVCGDSHTSTHGAFGALAMGIGTSEVEHVLATQTLPLRPFKTMAVNVDGRLPDGVSAKDIILALIAKIGTGGGQGHVIEYRGSAIESLSMEGRMTICNMSIEAGARAGMVAPDETTYAFLRGRPHAPTGAQWDTALVYWQRLRTDVGAVFDTEVYLDAASLSPFVTWGTNPGQGVPLAAAVPDPQLMTDDAERQAAEKALAYMDLRPGTAMREIAVDAVFVGSCTNGRIEDLRVVAEVLRGRKVADGVRMLIVPGSMRVRAQAEAEGLGEIFTDAGAQWRQAGCSMCLGMNPDQLASGERCAATSNRNFEGRQGAGGRTHLVSPAVAAATAVRGTLSSPADLN</sequence>
<comment type="function">
    <text evidence="1">Catalyzes the isomerization between 2-isopropylmalate and 3-isopropylmalate, via the formation of 2-isopropylmaleate.</text>
</comment>
<comment type="catalytic activity">
    <reaction evidence="1">
        <text>(2R,3S)-3-isopropylmalate = (2S)-2-isopropylmalate</text>
        <dbReference type="Rhea" id="RHEA:32287"/>
        <dbReference type="ChEBI" id="CHEBI:1178"/>
        <dbReference type="ChEBI" id="CHEBI:35121"/>
        <dbReference type="EC" id="4.2.1.33"/>
    </reaction>
</comment>
<comment type="cofactor">
    <cofactor evidence="1">
        <name>[4Fe-4S] cluster</name>
        <dbReference type="ChEBI" id="CHEBI:49883"/>
    </cofactor>
    <text evidence="1">Binds 1 [4Fe-4S] cluster per subunit.</text>
</comment>
<comment type="pathway">
    <text evidence="1">Amino-acid biosynthesis; L-leucine biosynthesis; L-leucine from 3-methyl-2-oxobutanoate: step 2/4.</text>
</comment>
<comment type="subunit">
    <text evidence="1">Heterodimer of LeuC and LeuD.</text>
</comment>
<comment type="induction">
    <text evidence="2">Induced in response to the thiol oxidant diamide.</text>
</comment>
<comment type="similarity">
    <text evidence="1">Belongs to the aconitase/IPM isomerase family. LeuC type 1 subfamily.</text>
</comment>
<reference key="1">
    <citation type="journal article" date="2003" name="Proc. Natl. Acad. Sci. U.S.A.">
        <title>The complete genome sequence of Mycobacterium bovis.</title>
        <authorList>
            <person name="Garnier T."/>
            <person name="Eiglmeier K."/>
            <person name="Camus J.-C."/>
            <person name="Medina N."/>
            <person name="Mansoor H."/>
            <person name="Pryor M."/>
            <person name="Duthoy S."/>
            <person name="Grondin S."/>
            <person name="Lacroix C."/>
            <person name="Monsempe C."/>
            <person name="Simon S."/>
            <person name="Harris B."/>
            <person name="Atkin R."/>
            <person name="Doggett J."/>
            <person name="Mayes R."/>
            <person name="Keating L."/>
            <person name="Wheeler P.R."/>
            <person name="Parkhill J."/>
            <person name="Barrell B.G."/>
            <person name="Cole S.T."/>
            <person name="Gordon S.V."/>
            <person name="Hewinson R.G."/>
        </authorList>
    </citation>
    <scope>NUCLEOTIDE SEQUENCE [LARGE SCALE GENOMIC DNA]</scope>
    <source>
        <strain>ATCC BAA-935 / AF2122/97</strain>
    </source>
</reference>
<reference key="2">
    <citation type="journal article" date="2017" name="Genome Announc.">
        <title>Updated reference genome sequence and annotation of Mycobacterium bovis AF2122/97.</title>
        <authorList>
            <person name="Malone K.M."/>
            <person name="Farrell D."/>
            <person name="Stuber T.P."/>
            <person name="Schubert O.T."/>
            <person name="Aebersold R."/>
            <person name="Robbe-Austerman S."/>
            <person name="Gordon S.V."/>
        </authorList>
    </citation>
    <scope>NUCLEOTIDE SEQUENCE [LARGE SCALE GENOMIC DNA]</scope>
    <scope>GENOME REANNOTATION</scope>
    <source>
        <strain>ATCC BAA-935 / AF2122/97</strain>
    </source>
</reference>
<reference key="3">
    <citation type="journal article" date="2005" name="FEMS Microbiol. Lett.">
        <title>Thiol specific oxidative stress response in Mycobacteria.</title>
        <authorList>
            <person name="Dosanjh N.S."/>
            <person name="Rawat M."/>
            <person name="Chung J.-H."/>
            <person name="Av-Gay Y."/>
        </authorList>
    </citation>
    <scope>IDENTIFICATION BY MASS SPECTROMETRY</scope>
    <scope>INDUCTION</scope>
    <source>
        <strain>BCG / Pasteur</strain>
    </source>
</reference>
<protein>
    <recommendedName>
        <fullName evidence="1">3-isopropylmalate dehydratase large subunit</fullName>
        <ecNumber evidence="1">4.2.1.33</ecNumber>
    </recommendedName>
    <alternativeName>
        <fullName evidence="1">Alpha-IPM isomerase</fullName>
        <shortName evidence="1">IPMI</shortName>
    </alternativeName>
    <alternativeName>
        <fullName evidence="1">Isopropylmalate isomerase</fullName>
    </alternativeName>
</protein>
<evidence type="ECO:0000255" key="1">
    <source>
        <dbReference type="HAMAP-Rule" id="MF_01026"/>
    </source>
</evidence>
<evidence type="ECO:0000269" key="2">
    <source>
    </source>
</evidence>
<feature type="chain" id="PRO_0000076763" description="3-isopropylmalate dehydratase large subunit">
    <location>
        <begin position="1"/>
        <end position="473"/>
    </location>
</feature>
<feature type="binding site" evidence="1">
    <location>
        <position position="354"/>
    </location>
    <ligand>
        <name>[4Fe-4S] cluster</name>
        <dbReference type="ChEBI" id="CHEBI:49883"/>
    </ligand>
</feature>
<feature type="binding site" evidence="1">
    <location>
        <position position="414"/>
    </location>
    <ligand>
        <name>[4Fe-4S] cluster</name>
        <dbReference type="ChEBI" id="CHEBI:49883"/>
    </ligand>
</feature>
<feature type="binding site" evidence="1">
    <location>
        <position position="417"/>
    </location>
    <ligand>
        <name>[4Fe-4S] cluster</name>
        <dbReference type="ChEBI" id="CHEBI:49883"/>
    </ligand>
</feature>
<dbReference type="EC" id="4.2.1.33" evidence="1"/>
<dbReference type="EMBL" id="LT708304">
    <property type="protein sequence ID" value="SIU01636.1"/>
    <property type="molecule type" value="Genomic_DNA"/>
</dbReference>
<dbReference type="RefSeq" id="NP_856657.1">
    <property type="nucleotide sequence ID" value="NC_002945.3"/>
</dbReference>
<dbReference type="RefSeq" id="WP_003415114.1">
    <property type="nucleotide sequence ID" value="NC_002945.4"/>
</dbReference>
<dbReference type="SMR" id="Q7TXH6"/>
<dbReference type="KEGG" id="mbo:BQ2027_MB3012C"/>
<dbReference type="PATRIC" id="fig|233413.5.peg.3311"/>
<dbReference type="UniPathway" id="UPA00048">
    <property type="reaction ID" value="UER00071"/>
</dbReference>
<dbReference type="Proteomes" id="UP000001419">
    <property type="component" value="Chromosome"/>
</dbReference>
<dbReference type="GO" id="GO:0003861">
    <property type="term" value="F:3-isopropylmalate dehydratase activity"/>
    <property type="evidence" value="ECO:0007669"/>
    <property type="project" value="UniProtKB-UniRule"/>
</dbReference>
<dbReference type="GO" id="GO:0051539">
    <property type="term" value="F:4 iron, 4 sulfur cluster binding"/>
    <property type="evidence" value="ECO:0007669"/>
    <property type="project" value="UniProtKB-KW"/>
</dbReference>
<dbReference type="GO" id="GO:0046872">
    <property type="term" value="F:metal ion binding"/>
    <property type="evidence" value="ECO:0007669"/>
    <property type="project" value="UniProtKB-KW"/>
</dbReference>
<dbReference type="GO" id="GO:0009098">
    <property type="term" value="P:L-leucine biosynthetic process"/>
    <property type="evidence" value="ECO:0007669"/>
    <property type="project" value="UniProtKB-UniRule"/>
</dbReference>
<dbReference type="CDD" id="cd01583">
    <property type="entry name" value="IPMI"/>
    <property type="match status" value="1"/>
</dbReference>
<dbReference type="FunFam" id="3.30.499.10:FF:000006">
    <property type="entry name" value="3-isopropylmalate dehydratase large subunit"/>
    <property type="match status" value="1"/>
</dbReference>
<dbReference type="FunFam" id="3.30.499.10:FF:000007">
    <property type="entry name" value="3-isopropylmalate dehydratase large subunit"/>
    <property type="match status" value="1"/>
</dbReference>
<dbReference type="Gene3D" id="3.30.499.10">
    <property type="entry name" value="Aconitase, domain 3"/>
    <property type="match status" value="2"/>
</dbReference>
<dbReference type="HAMAP" id="MF_01026">
    <property type="entry name" value="LeuC_type1"/>
    <property type="match status" value="1"/>
</dbReference>
<dbReference type="InterPro" id="IPR004430">
    <property type="entry name" value="3-IsopropMal_deHydase_lsu"/>
</dbReference>
<dbReference type="InterPro" id="IPR015931">
    <property type="entry name" value="Acnase/IPM_dHydase_lsu_aba_1/3"/>
</dbReference>
<dbReference type="InterPro" id="IPR001030">
    <property type="entry name" value="Acoase/IPM_deHydtase_lsu_aba"/>
</dbReference>
<dbReference type="InterPro" id="IPR018136">
    <property type="entry name" value="Aconitase_4Fe-4S_BS"/>
</dbReference>
<dbReference type="InterPro" id="IPR036008">
    <property type="entry name" value="Aconitase_4Fe-4S_dom"/>
</dbReference>
<dbReference type="InterPro" id="IPR050067">
    <property type="entry name" value="IPM_dehydratase_rel_enz"/>
</dbReference>
<dbReference type="InterPro" id="IPR033941">
    <property type="entry name" value="IPMI_cat"/>
</dbReference>
<dbReference type="NCBIfam" id="TIGR00170">
    <property type="entry name" value="leuC"/>
    <property type="match status" value="1"/>
</dbReference>
<dbReference type="NCBIfam" id="NF004016">
    <property type="entry name" value="PRK05478.1"/>
    <property type="match status" value="1"/>
</dbReference>
<dbReference type="NCBIfam" id="NF009116">
    <property type="entry name" value="PRK12466.1"/>
    <property type="match status" value="1"/>
</dbReference>
<dbReference type="PANTHER" id="PTHR43822:SF9">
    <property type="entry name" value="3-ISOPROPYLMALATE DEHYDRATASE"/>
    <property type="match status" value="1"/>
</dbReference>
<dbReference type="PANTHER" id="PTHR43822">
    <property type="entry name" value="HOMOACONITASE, MITOCHONDRIAL-RELATED"/>
    <property type="match status" value="1"/>
</dbReference>
<dbReference type="Pfam" id="PF00330">
    <property type="entry name" value="Aconitase"/>
    <property type="match status" value="1"/>
</dbReference>
<dbReference type="PRINTS" id="PR00415">
    <property type="entry name" value="ACONITASE"/>
</dbReference>
<dbReference type="SUPFAM" id="SSF53732">
    <property type="entry name" value="Aconitase iron-sulfur domain"/>
    <property type="match status" value="1"/>
</dbReference>
<dbReference type="PROSITE" id="PS00450">
    <property type="entry name" value="ACONITASE_1"/>
    <property type="match status" value="1"/>
</dbReference>
<dbReference type="PROSITE" id="PS01244">
    <property type="entry name" value="ACONITASE_2"/>
    <property type="match status" value="1"/>
</dbReference>
<keyword id="KW-0004">4Fe-4S</keyword>
<keyword id="KW-0028">Amino-acid biosynthesis</keyword>
<keyword id="KW-0100">Branched-chain amino acid biosynthesis</keyword>
<keyword id="KW-0408">Iron</keyword>
<keyword id="KW-0411">Iron-sulfur</keyword>
<keyword id="KW-0432">Leucine biosynthesis</keyword>
<keyword id="KW-0456">Lyase</keyword>
<keyword id="KW-0479">Metal-binding</keyword>
<keyword id="KW-1185">Reference proteome</keyword>
<accession>Q7TXH6</accession>
<accession>A0A1R3Y3L1</accession>
<accession>X2BMS1</accession>
<organism>
    <name type="scientific">Mycobacterium bovis (strain ATCC BAA-935 / AF2122/97)</name>
    <dbReference type="NCBI Taxonomy" id="233413"/>
    <lineage>
        <taxon>Bacteria</taxon>
        <taxon>Bacillati</taxon>
        <taxon>Actinomycetota</taxon>
        <taxon>Actinomycetes</taxon>
        <taxon>Mycobacteriales</taxon>
        <taxon>Mycobacteriaceae</taxon>
        <taxon>Mycobacterium</taxon>
        <taxon>Mycobacterium tuberculosis complex</taxon>
    </lineage>
</organism>